<protein>
    <recommendedName>
        <fullName evidence="1">dCTP deaminase</fullName>
        <ecNumber evidence="1">3.5.4.13</ecNumber>
    </recommendedName>
    <alternativeName>
        <fullName evidence="1">Deoxycytidine triphosphate deaminase</fullName>
    </alternativeName>
</protein>
<proteinExistence type="inferred from homology"/>
<comment type="function">
    <text evidence="1">Catalyzes the deamination of dCTP to dUTP.</text>
</comment>
<comment type="catalytic activity">
    <reaction evidence="1">
        <text>dCTP + H2O + H(+) = dUTP + NH4(+)</text>
        <dbReference type="Rhea" id="RHEA:22680"/>
        <dbReference type="ChEBI" id="CHEBI:15377"/>
        <dbReference type="ChEBI" id="CHEBI:15378"/>
        <dbReference type="ChEBI" id="CHEBI:28938"/>
        <dbReference type="ChEBI" id="CHEBI:61481"/>
        <dbReference type="ChEBI" id="CHEBI:61555"/>
        <dbReference type="EC" id="3.5.4.13"/>
    </reaction>
</comment>
<comment type="pathway">
    <text evidence="1">Pyrimidine metabolism; dUMP biosynthesis; dUMP from dCTP (dUTP route): step 1/2.</text>
</comment>
<comment type="subunit">
    <text evidence="1">Homotrimer.</text>
</comment>
<comment type="similarity">
    <text evidence="1">Belongs to the dCTP deaminase family.</text>
</comment>
<name>DCD_BURM9</name>
<organism>
    <name type="scientific">Burkholderia mallei (strain NCTC 10229)</name>
    <dbReference type="NCBI Taxonomy" id="412022"/>
    <lineage>
        <taxon>Bacteria</taxon>
        <taxon>Pseudomonadati</taxon>
        <taxon>Pseudomonadota</taxon>
        <taxon>Betaproteobacteria</taxon>
        <taxon>Burkholderiales</taxon>
        <taxon>Burkholderiaceae</taxon>
        <taxon>Burkholderia</taxon>
        <taxon>pseudomallei group</taxon>
    </lineage>
</organism>
<keyword id="KW-0378">Hydrolase</keyword>
<keyword id="KW-0546">Nucleotide metabolism</keyword>
<keyword id="KW-0547">Nucleotide-binding</keyword>
<dbReference type="EC" id="3.5.4.13" evidence="1"/>
<dbReference type="EMBL" id="CP000546">
    <property type="protein sequence ID" value="ABN01238.1"/>
    <property type="molecule type" value="Genomic_DNA"/>
</dbReference>
<dbReference type="RefSeq" id="WP_004192666.1">
    <property type="nucleotide sequence ID" value="NC_008836.1"/>
</dbReference>
<dbReference type="SMR" id="A2SAG2"/>
<dbReference type="GeneID" id="93059502"/>
<dbReference type="KEGG" id="bml:BMA10229_A2987"/>
<dbReference type="HOGENOM" id="CLU_087476_4_0_4"/>
<dbReference type="UniPathway" id="UPA00610">
    <property type="reaction ID" value="UER00665"/>
</dbReference>
<dbReference type="Proteomes" id="UP000002283">
    <property type="component" value="Chromosome I"/>
</dbReference>
<dbReference type="GO" id="GO:0008829">
    <property type="term" value="F:dCTP deaminase activity"/>
    <property type="evidence" value="ECO:0007669"/>
    <property type="project" value="UniProtKB-UniRule"/>
</dbReference>
<dbReference type="GO" id="GO:0000166">
    <property type="term" value="F:nucleotide binding"/>
    <property type="evidence" value="ECO:0007669"/>
    <property type="project" value="UniProtKB-KW"/>
</dbReference>
<dbReference type="GO" id="GO:0006226">
    <property type="term" value="P:dUMP biosynthetic process"/>
    <property type="evidence" value="ECO:0007669"/>
    <property type="project" value="UniProtKB-UniPathway"/>
</dbReference>
<dbReference type="GO" id="GO:0006229">
    <property type="term" value="P:dUTP biosynthetic process"/>
    <property type="evidence" value="ECO:0007669"/>
    <property type="project" value="UniProtKB-UniRule"/>
</dbReference>
<dbReference type="GO" id="GO:0015949">
    <property type="term" value="P:nucleobase-containing small molecule interconversion"/>
    <property type="evidence" value="ECO:0007669"/>
    <property type="project" value="TreeGrafter"/>
</dbReference>
<dbReference type="CDD" id="cd07557">
    <property type="entry name" value="trimeric_dUTPase"/>
    <property type="match status" value="1"/>
</dbReference>
<dbReference type="FunFam" id="2.70.40.10:FF:000001">
    <property type="entry name" value="dCTP deaminase"/>
    <property type="match status" value="1"/>
</dbReference>
<dbReference type="Gene3D" id="2.70.40.10">
    <property type="match status" value="1"/>
</dbReference>
<dbReference type="HAMAP" id="MF_00146">
    <property type="entry name" value="dCTP_deaminase"/>
    <property type="match status" value="1"/>
</dbReference>
<dbReference type="InterPro" id="IPR011962">
    <property type="entry name" value="dCTP_deaminase"/>
</dbReference>
<dbReference type="InterPro" id="IPR036157">
    <property type="entry name" value="dUTPase-like_sf"/>
</dbReference>
<dbReference type="InterPro" id="IPR033704">
    <property type="entry name" value="dUTPase_trimeric"/>
</dbReference>
<dbReference type="NCBIfam" id="TIGR02274">
    <property type="entry name" value="dCTP_deam"/>
    <property type="match status" value="1"/>
</dbReference>
<dbReference type="PANTHER" id="PTHR42680">
    <property type="entry name" value="DCTP DEAMINASE"/>
    <property type="match status" value="1"/>
</dbReference>
<dbReference type="PANTHER" id="PTHR42680:SF3">
    <property type="entry name" value="DCTP DEAMINASE"/>
    <property type="match status" value="1"/>
</dbReference>
<dbReference type="Pfam" id="PF22769">
    <property type="entry name" value="DCD"/>
    <property type="match status" value="1"/>
</dbReference>
<dbReference type="SUPFAM" id="SSF51283">
    <property type="entry name" value="dUTPase-like"/>
    <property type="match status" value="1"/>
</dbReference>
<reference key="1">
    <citation type="journal article" date="2010" name="Genome Biol. Evol.">
        <title>Continuing evolution of Burkholderia mallei through genome reduction and large-scale rearrangements.</title>
        <authorList>
            <person name="Losada L."/>
            <person name="Ronning C.M."/>
            <person name="DeShazer D."/>
            <person name="Woods D."/>
            <person name="Fedorova N."/>
            <person name="Kim H.S."/>
            <person name="Shabalina S.A."/>
            <person name="Pearson T.R."/>
            <person name="Brinkac L."/>
            <person name="Tan P."/>
            <person name="Nandi T."/>
            <person name="Crabtree J."/>
            <person name="Badger J."/>
            <person name="Beckstrom-Sternberg S."/>
            <person name="Saqib M."/>
            <person name="Schutzer S.E."/>
            <person name="Keim P."/>
            <person name="Nierman W.C."/>
        </authorList>
    </citation>
    <scope>NUCLEOTIDE SEQUENCE [LARGE SCALE GENOMIC DNA]</scope>
    <source>
        <strain>NCTC 10229</strain>
    </source>
</reference>
<evidence type="ECO:0000255" key="1">
    <source>
        <dbReference type="HAMAP-Rule" id="MF_00146"/>
    </source>
</evidence>
<gene>
    <name evidence="1" type="primary">dcd</name>
    <name type="ordered locus">BMA10229_A2987</name>
</gene>
<accession>A2SAG2</accession>
<feature type="chain" id="PRO_1000009688" description="dCTP deaminase">
    <location>
        <begin position="1"/>
        <end position="189"/>
    </location>
</feature>
<feature type="active site" description="Proton donor/acceptor" evidence="1">
    <location>
        <position position="138"/>
    </location>
</feature>
<feature type="binding site" evidence="1">
    <location>
        <begin position="112"/>
        <end position="117"/>
    </location>
    <ligand>
        <name>dCTP</name>
        <dbReference type="ChEBI" id="CHEBI:61481"/>
    </ligand>
</feature>
<feature type="binding site" evidence="1">
    <location>
        <begin position="136"/>
        <end position="138"/>
    </location>
    <ligand>
        <name>dCTP</name>
        <dbReference type="ChEBI" id="CHEBI:61481"/>
    </ligand>
</feature>
<feature type="binding site" evidence="1">
    <location>
        <position position="157"/>
    </location>
    <ligand>
        <name>dCTP</name>
        <dbReference type="ChEBI" id="CHEBI:61481"/>
    </ligand>
</feature>
<feature type="binding site" evidence="1">
    <location>
        <position position="171"/>
    </location>
    <ligand>
        <name>dCTP</name>
        <dbReference type="ChEBI" id="CHEBI:61481"/>
    </ligand>
</feature>
<feature type="binding site" evidence="1">
    <location>
        <position position="181"/>
    </location>
    <ligand>
        <name>dCTP</name>
        <dbReference type="ChEBI" id="CHEBI:61481"/>
    </ligand>
</feature>
<sequence length="189" mass="21312">MSIKSDKWIRRMAEEHKMIEPFVPDQVRAAEDGRKIVSYGTSSYGYDIRCADEFKIFTNINSTIVDPKNFDEGSFVDFKGDVCIIPPNSFALARTVEYFRIPRTVLTVCLGKSTYARCGIIVNVTPFEPEWEGYVTLEFSNTTPLPAKIYANEGVAQVLFFESDEVCDVSYADRGGKYQGQRGVTLPKT</sequence>